<keyword id="KW-0025">Alternative splicing</keyword>
<keyword id="KW-0963">Cytoplasm</keyword>
<keyword id="KW-0217">Developmental protein</keyword>
<keyword id="KW-0880">Kelch repeat</keyword>
<keyword id="KW-1185">Reference proteome</keyword>
<keyword id="KW-0677">Repeat</keyword>
<keyword id="KW-0833">Ubl conjugation pathway</keyword>
<name>KLH40_MOUSE</name>
<feature type="chain" id="PRO_0000274236" description="Kelch-like protein 40">
    <location>
        <begin position="1"/>
        <end position="621"/>
    </location>
</feature>
<feature type="domain" description="BTB" evidence="2">
    <location>
        <begin position="33"/>
        <end position="98"/>
    </location>
</feature>
<feature type="domain" description="BACK" evidence="1">
    <location>
        <begin position="133"/>
        <end position="239"/>
    </location>
</feature>
<feature type="repeat" description="Kelch 1" evidence="1">
    <location>
        <begin position="360"/>
        <end position="412"/>
    </location>
</feature>
<feature type="repeat" description="Kelch 2" evidence="1">
    <location>
        <begin position="413"/>
        <end position="462"/>
    </location>
</feature>
<feature type="repeat" description="Kelch 3" evidence="1">
    <location>
        <begin position="463"/>
        <end position="510"/>
    </location>
</feature>
<feature type="repeat" description="Kelch 4" evidence="1">
    <location>
        <begin position="512"/>
        <end position="557"/>
    </location>
</feature>
<feature type="repeat" description="Kelch 5" evidence="1">
    <location>
        <begin position="559"/>
        <end position="613"/>
    </location>
</feature>
<feature type="region of interest" description="Disordered" evidence="3">
    <location>
        <begin position="265"/>
        <end position="298"/>
    </location>
</feature>
<feature type="compositionally biased region" description="Basic and acidic residues" evidence="3">
    <location>
        <begin position="274"/>
        <end position="284"/>
    </location>
</feature>
<feature type="splice variant" id="VSP_022683" description="In isoform 2." evidence="8">
    <original>FDHLDSEWLGMPPLPSPRCLFGLGEALNAIYVVGGRELKDSEDSLDSVLCYDRLSFKWGES</original>
    <variation>VPGQS</variation>
    <location>
        <begin position="385"/>
        <end position="445"/>
    </location>
</feature>
<feature type="splice variant" id="VSP_022684" description="In isoform 2." evidence="8">
    <location>
        <begin position="446"/>
        <end position="621"/>
    </location>
</feature>
<feature type="sequence conflict" description="In Ref. 1; BAE36021." evidence="11" ref="1">
    <original>V</original>
    <variation>L</variation>
    <location>
        <position position="616"/>
    </location>
</feature>
<evidence type="ECO:0000255" key="1"/>
<evidence type="ECO:0000255" key="2">
    <source>
        <dbReference type="PROSITE-ProRule" id="PRU00037"/>
    </source>
</evidence>
<evidence type="ECO:0000256" key="3">
    <source>
        <dbReference type="SAM" id="MobiDB-lite"/>
    </source>
</evidence>
<evidence type="ECO:0000269" key="4">
    <source>
    </source>
</evidence>
<evidence type="ECO:0000269" key="5">
    <source>
    </source>
</evidence>
<evidence type="ECO:0000269" key="6">
    <source>
    </source>
</evidence>
<evidence type="ECO:0000269" key="7">
    <source>
    </source>
</evidence>
<evidence type="ECO:0000303" key="8">
    <source>
    </source>
</evidence>
<evidence type="ECO:0000303" key="9">
    <source>
    </source>
</evidence>
<evidence type="ECO:0000303" key="10">
    <source>
    </source>
</evidence>
<evidence type="ECO:0000305" key="11"/>
<evidence type="ECO:0000312" key="12">
    <source>
        <dbReference type="MGI" id="MGI:1919580"/>
    </source>
</evidence>
<dbReference type="EMBL" id="AK009491">
    <property type="protein sequence ID" value="BAB26321.1"/>
    <property type="molecule type" value="mRNA"/>
</dbReference>
<dbReference type="EMBL" id="AK160799">
    <property type="protein sequence ID" value="BAE36021.1"/>
    <property type="molecule type" value="mRNA"/>
</dbReference>
<dbReference type="EMBL" id="BC125576">
    <property type="protein sequence ID" value="AAI25577.1"/>
    <property type="molecule type" value="mRNA"/>
</dbReference>
<dbReference type="EMBL" id="BC137889">
    <property type="protein sequence ID" value="AAI37890.1"/>
    <property type="molecule type" value="mRNA"/>
</dbReference>
<dbReference type="CCDS" id="CCDS23637.1">
    <molecule id="Q9D783-1"/>
</dbReference>
<dbReference type="RefSeq" id="NP_082478.1">
    <property type="nucleotide sequence ID" value="NM_028202.3"/>
</dbReference>
<dbReference type="SMR" id="Q9D783"/>
<dbReference type="BioGRID" id="215313">
    <property type="interactions" value="14"/>
</dbReference>
<dbReference type="FunCoup" id="Q9D783">
    <property type="interactions" value="46"/>
</dbReference>
<dbReference type="STRING" id="10090.ENSMUSP00000095873"/>
<dbReference type="iPTMnet" id="Q9D783"/>
<dbReference type="PhosphoSitePlus" id="Q9D783"/>
<dbReference type="jPOST" id="Q9D783"/>
<dbReference type="PaxDb" id="10090-ENSMUSP00000095873"/>
<dbReference type="ProteomicsDB" id="264849">
    <molecule id="Q9D783-1"/>
</dbReference>
<dbReference type="ProteomicsDB" id="264850">
    <molecule id="Q9D783-2"/>
</dbReference>
<dbReference type="GeneID" id="72330"/>
<dbReference type="KEGG" id="mmu:72330"/>
<dbReference type="UCSC" id="uc009sdv.2">
    <molecule id="Q9D783-1"/>
    <property type="organism name" value="mouse"/>
</dbReference>
<dbReference type="UCSC" id="uc029xgr.1">
    <molecule id="Q9D783-2"/>
    <property type="organism name" value="mouse"/>
</dbReference>
<dbReference type="AGR" id="MGI:1919580"/>
<dbReference type="CTD" id="131377"/>
<dbReference type="MGI" id="MGI:1919580">
    <property type="gene designation" value="Klhl40"/>
</dbReference>
<dbReference type="eggNOG" id="KOG4441">
    <property type="taxonomic scope" value="Eukaryota"/>
</dbReference>
<dbReference type="InParanoid" id="Q9D783"/>
<dbReference type="OrthoDB" id="6359816at2759"/>
<dbReference type="PhylomeDB" id="Q9D783"/>
<dbReference type="TreeFam" id="TF351653"/>
<dbReference type="BioGRID-ORCS" id="72330">
    <property type="hits" value="2 hits in 77 CRISPR screens"/>
</dbReference>
<dbReference type="PRO" id="PR:Q9D783"/>
<dbReference type="Proteomes" id="UP000000589">
    <property type="component" value="Unplaced"/>
</dbReference>
<dbReference type="RNAct" id="Q9D783">
    <property type="molecule type" value="protein"/>
</dbReference>
<dbReference type="GO" id="GO:0031672">
    <property type="term" value="C:A band"/>
    <property type="evidence" value="ECO:0000314"/>
    <property type="project" value="MGI"/>
</dbReference>
<dbReference type="GO" id="GO:0031463">
    <property type="term" value="C:Cul3-RING ubiquitin ligase complex"/>
    <property type="evidence" value="ECO:0000314"/>
    <property type="project" value="UniProtKB"/>
</dbReference>
<dbReference type="GO" id="GO:0005737">
    <property type="term" value="C:cytoplasm"/>
    <property type="evidence" value="ECO:0000314"/>
    <property type="project" value="UniProtKB"/>
</dbReference>
<dbReference type="GO" id="GO:0031674">
    <property type="term" value="C:I band"/>
    <property type="evidence" value="ECO:0000314"/>
    <property type="project" value="MGI"/>
</dbReference>
<dbReference type="GO" id="GO:0032435">
    <property type="term" value="P:negative regulation of proteasomal ubiquitin-dependent protein catabolic process"/>
    <property type="evidence" value="ECO:0000314"/>
    <property type="project" value="MGI"/>
</dbReference>
<dbReference type="GO" id="GO:0031397">
    <property type="term" value="P:negative regulation of protein ubiquitination"/>
    <property type="evidence" value="ECO:0000314"/>
    <property type="project" value="MGI"/>
</dbReference>
<dbReference type="GO" id="GO:0032436">
    <property type="term" value="P:positive regulation of proteasomal ubiquitin-dependent protein catabolic process"/>
    <property type="evidence" value="ECO:0000314"/>
    <property type="project" value="UniProtKB"/>
</dbReference>
<dbReference type="GO" id="GO:0031398">
    <property type="term" value="P:positive regulation of protein ubiquitination"/>
    <property type="evidence" value="ECO:0000314"/>
    <property type="project" value="UniProtKB"/>
</dbReference>
<dbReference type="GO" id="GO:0043161">
    <property type="term" value="P:proteasome-mediated ubiquitin-dependent protein catabolic process"/>
    <property type="evidence" value="ECO:0000314"/>
    <property type="project" value="MGI"/>
</dbReference>
<dbReference type="GO" id="GO:0016567">
    <property type="term" value="P:protein ubiquitination"/>
    <property type="evidence" value="ECO:0000314"/>
    <property type="project" value="MGI"/>
</dbReference>
<dbReference type="GO" id="GO:0048741">
    <property type="term" value="P:skeletal muscle fiber development"/>
    <property type="evidence" value="ECO:0000315"/>
    <property type="project" value="UniProtKB"/>
</dbReference>
<dbReference type="GO" id="GO:0098528">
    <property type="term" value="P:skeletal muscle fiber differentiation"/>
    <property type="evidence" value="ECO:0000315"/>
    <property type="project" value="UniProtKB"/>
</dbReference>
<dbReference type="FunFam" id="3.30.710.10:FF:000006">
    <property type="entry name" value="Kelch repeat and BTB domain-containing 6"/>
    <property type="match status" value="1"/>
</dbReference>
<dbReference type="FunFam" id="1.25.40.420:FF:000001">
    <property type="entry name" value="Kelch-like family member 12"/>
    <property type="match status" value="1"/>
</dbReference>
<dbReference type="FunFam" id="2.120.10.80:FF:000037">
    <property type="entry name" value="Kelch-like family member 40"/>
    <property type="match status" value="1"/>
</dbReference>
<dbReference type="Gene3D" id="1.25.40.420">
    <property type="match status" value="1"/>
</dbReference>
<dbReference type="Gene3D" id="2.120.10.80">
    <property type="entry name" value="Kelch-type beta propeller"/>
    <property type="match status" value="1"/>
</dbReference>
<dbReference type="Gene3D" id="3.30.710.10">
    <property type="entry name" value="Potassium Channel Kv1.1, Chain A"/>
    <property type="match status" value="1"/>
</dbReference>
<dbReference type="InterPro" id="IPR011705">
    <property type="entry name" value="BACK"/>
</dbReference>
<dbReference type="InterPro" id="IPR017096">
    <property type="entry name" value="BTB-kelch_protein"/>
</dbReference>
<dbReference type="InterPro" id="IPR000210">
    <property type="entry name" value="BTB/POZ_dom"/>
</dbReference>
<dbReference type="InterPro" id="IPR015915">
    <property type="entry name" value="Kelch-typ_b-propeller"/>
</dbReference>
<dbReference type="InterPro" id="IPR006652">
    <property type="entry name" value="Kelch_1"/>
</dbReference>
<dbReference type="InterPro" id="IPR011333">
    <property type="entry name" value="SKP1/BTB/POZ_sf"/>
</dbReference>
<dbReference type="PANTHER" id="PTHR24412">
    <property type="entry name" value="KELCH PROTEIN"/>
    <property type="match status" value="1"/>
</dbReference>
<dbReference type="PANTHER" id="PTHR24412:SF22">
    <property type="entry name" value="KELCH-LIKE PROTEIN 40"/>
    <property type="match status" value="1"/>
</dbReference>
<dbReference type="Pfam" id="PF07707">
    <property type="entry name" value="BACK"/>
    <property type="match status" value="1"/>
</dbReference>
<dbReference type="Pfam" id="PF00651">
    <property type="entry name" value="BTB"/>
    <property type="match status" value="1"/>
</dbReference>
<dbReference type="Pfam" id="PF24681">
    <property type="entry name" value="Kelch_KLHDC2_KLHL20_DRC7"/>
    <property type="match status" value="1"/>
</dbReference>
<dbReference type="PIRSF" id="PIRSF037037">
    <property type="entry name" value="Kelch-like_protein_gigaxonin"/>
    <property type="match status" value="1"/>
</dbReference>
<dbReference type="SMART" id="SM00875">
    <property type="entry name" value="BACK"/>
    <property type="match status" value="1"/>
</dbReference>
<dbReference type="SMART" id="SM00225">
    <property type="entry name" value="BTB"/>
    <property type="match status" value="1"/>
</dbReference>
<dbReference type="SMART" id="SM00612">
    <property type="entry name" value="Kelch"/>
    <property type="match status" value="4"/>
</dbReference>
<dbReference type="SUPFAM" id="SSF117281">
    <property type="entry name" value="Kelch motif"/>
    <property type="match status" value="1"/>
</dbReference>
<dbReference type="SUPFAM" id="SSF54695">
    <property type="entry name" value="POZ domain"/>
    <property type="match status" value="1"/>
</dbReference>
<dbReference type="PROSITE" id="PS50097">
    <property type="entry name" value="BTB"/>
    <property type="match status" value="1"/>
</dbReference>
<organism>
    <name type="scientific">Mus musculus</name>
    <name type="common">Mouse</name>
    <dbReference type="NCBI Taxonomy" id="10090"/>
    <lineage>
        <taxon>Eukaryota</taxon>
        <taxon>Metazoa</taxon>
        <taxon>Chordata</taxon>
        <taxon>Craniata</taxon>
        <taxon>Vertebrata</taxon>
        <taxon>Euteleostomi</taxon>
        <taxon>Mammalia</taxon>
        <taxon>Eutheria</taxon>
        <taxon>Euarchontoglires</taxon>
        <taxon>Glires</taxon>
        <taxon>Rodentia</taxon>
        <taxon>Myomorpha</taxon>
        <taxon>Muroidea</taxon>
        <taxon>Muridae</taxon>
        <taxon>Murinae</taxon>
        <taxon>Mus</taxon>
        <taxon>Mus</taxon>
    </lineage>
</organism>
<comment type="function">
    <text evidence="6 7">Substrate-specific adapter of a BCR (BTB-CUL3-RBX1) E3 ubiquitin ligase complex that acts as a key regulator of skeletal muscle development (PubMed:25940086). The BCR(KLHL40) complex acts by mediating ubiquitination and degradation of TFDP1, thereby regulating the activity of the E2F:DP transcription factor complex (PubMed:25940086). Promotes stabilization of LMOD3 by acting as a negative regulator of LMOD3 ubiquitination; the molecular process by which it negatively regulates ubiquitination of LMOD3 is however unclear (PubMed:24960163).</text>
</comment>
<comment type="subunit">
    <text evidence="5 6">Component of the BCR(KLHL40) E3 ubiquitin ligase complex, at least composed of CUL3, KLHL40 and RBX1 (PubMed:24361185). Interacts with LMOD3 (PubMed:24960163).</text>
</comment>
<comment type="subcellular location">
    <subcellularLocation>
        <location evidence="7">Cytoplasm</location>
    </subcellularLocation>
    <subcellularLocation>
        <location evidence="6">Cytoplasm</location>
        <location evidence="6">Myofibril</location>
        <location evidence="6">Sarcomere</location>
        <location evidence="6">A band</location>
    </subcellularLocation>
    <subcellularLocation>
        <location evidence="6">Cytoplasm</location>
        <location evidence="6">Myofibril</location>
        <location evidence="6">Sarcomere</location>
        <location evidence="6">I band</location>
    </subcellularLocation>
</comment>
<comment type="alternative products">
    <event type="alternative splicing"/>
    <isoform>
        <id>Q9D783-1</id>
        <name>1</name>
        <sequence type="displayed"/>
    </isoform>
    <isoform>
        <id>Q9D783-2</id>
        <name>2</name>
        <sequence type="described" ref="VSP_022683 VSP_022684"/>
    </isoform>
</comment>
<comment type="tissue specificity">
    <text evidence="4 6 7">Specifically expressed in skeletal muscles in embryonic, neonatal and adults (PubMed:24960163, PubMed:25940086). Expressed in various types of muscles, including extensor digitorum longus, gastrocnemius, soleus, diaphragm, masseter and heart (at protein level). Not detected in brain, liver and lung (at protein level).</text>
</comment>
<comment type="developmental stage">
    <text evidence="5">Absent early during embryogenesis (7 dpc), present at the middle stage (11 dpc) and highly expressed at the later stages (15 dpc and 17 dpc) (PubMed:24361185). Specifically expressed in the somites at 11.5 dpc and in the skeletal muscle at 15.5 dpc (PubMed:24361185).</text>
</comment>
<comment type="induction">
    <text evidence="4 5">Up-regulated during myogenic differentiation (PubMed:24361185). Induced during the differentiation of myoblasts into myotubes (PubMed:23746549).</text>
</comment>
<comment type="disruption phenotype">
    <text evidence="6 7">Neonates are normal in size at birth and were born with the expected Mendelian ratio (PubMed:24960163, PubMed:25940086). They however fail to gain weight and do not survive to weaning (PubMed:24960163, PubMed:25940086). Defects are due to smaller muscle fibers and a disorganized sarcomeric structure (PubMed:24960163, PubMed:25940086).</text>
</comment>
<comment type="similarity">
    <text evidence="11">Belongs to the KLHL40 family.</text>
</comment>
<reference key="1">
    <citation type="journal article" date="2005" name="Science">
        <title>The transcriptional landscape of the mammalian genome.</title>
        <authorList>
            <person name="Carninci P."/>
            <person name="Kasukawa T."/>
            <person name="Katayama S."/>
            <person name="Gough J."/>
            <person name="Frith M.C."/>
            <person name="Maeda N."/>
            <person name="Oyama R."/>
            <person name="Ravasi T."/>
            <person name="Lenhard B."/>
            <person name="Wells C."/>
            <person name="Kodzius R."/>
            <person name="Shimokawa K."/>
            <person name="Bajic V.B."/>
            <person name="Brenner S.E."/>
            <person name="Batalov S."/>
            <person name="Forrest A.R."/>
            <person name="Zavolan M."/>
            <person name="Davis M.J."/>
            <person name="Wilming L.G."/>
            <person name="Aidinis V."/>
            <person name="Allen J.E."/>
            <person name="Ambesi-Impiombato A."/>
            <person name="Apweiler R."/>
            <person name="Aturaliya R.N."/>
            <person name="Bailey T.L."/>
            <person name="Bansal M."/>
            <person name="Baxter L."/>
            <person name="Beisel K.W."/>
            <person name="Bersano T."/>
            <person name="Bono H."/>
            <person name="Chalk A.M."/>
            <person name="Chiu K.P."/>
            <person name="Choudhary V."/>
            <person name="Christoffels A."/>
            <person name="Clutterbuck D.R."/>
            <person name="Crowe M.L."/>
            <person name="Dalla E."/>
            <person name="Dalrymple B.P."/>
            <person name="de Bono B."/>
            <person name="Della Gatta G."/>
            <person name="di Bernardo D."/>
            <person name="Down T."/>
            <person name="Engstrom P."/>
            <person name="Fagiolini M."/>
            <person name="Faulkner G."/>
            <person name="Fletcher C.F."/>
            <person name="Fukushima T."/>
            <person name="Furuno M."/>
            <person name="Futaki S."/>
            <person name="Gariboldi M."/>
            <person name="Georgii-Hemming P."/>
            <person name="Gingeras T.R."/>
            <person name="Gojobori T."/>
            <person name="Green R.E."/>
            <person name="Gustincich S."/>
            <person name="Harbers M."/>
            <person name="Hayashi Y."/>
            <person name="Hensch T.K."/>
            <person name="Hirokawa N."/>
            <person name="Hill D."/>
            <person name="Huminiecki L."/>
            <person name="Iacono M."/>
            <person name="Ikeo K."/>
            <person name="Iwama A."/>
            <person name="Ishikawa T."/>
            <person name="Jakt M."/>
            <person name="Kanapin A."/>
            <person name="Katoh M."/>
            <person name="Kawasawa Y."/>
            <person name="Kelso J."/>
            <person name="Kitamura H."/>
            <person name="Kitano H."/>
            <person name="Kollias G."/>
            <person name="Krishnan S.P."/>
            <person name="Kruger A."/>
            <person name="Kummerfeld S.K."/>
            <person name="Kurochkin I.V."/>
            <person name="Lareau L.F."/>
            <person name="Lazarevic D."/>
            <person name="Lipovich L."/>
            <person name="Liu J."/>
            <person name="Liuni S."/>
            <person name="McWilliam S."/>
            <person name="Madan Babu M."/>
            <person name="Madera M."/>
            <person name="Marchionni L."/>
            <person name="Matsuda H."/>
            <person name="Matsuzawa S."/>
            <person name="Miki H."/>
            <person name="Mignone F."/>
            <person name="Miyake S."/>
            <person name="Morris K."/>
            <person name="Mottagui-Tabar S."/>
            <person name="Mulder N."/>
            <person name="Nakano N."/>
            <person name="Nakauchi H."/>
            <person name="Ng P."/>
            <person name="Nilsson R."/>
            <person name="Nishiguchi S."/>
            <person name="Nishikawa S."/>
            <person name="Nori F."/>
            <person name="Ohara O."/>
            <person name="Okazaki Y."/>
            <person name="Orlando V."/>
            <person name="Pang K.C."/>
            <person name="Pavan W.J."/>
            <person name="Pavesi G."/>
            <person name="Pesole G."/>
            <person name="Petrovsky N."/>
            <person name="Piazza S."/>
            <person name="Reed J."/>
            <person name="Reid J.F."/>
            <person name="Ring B.Z."/>
            <person name="Ringwald M."/>
            <person name="Rost B."/>
            <person name="Ruan Y."/>
            <person name="Salzberg S.L."/>
            <person name="Sandelin A."/>
            <person name="Schneider C."/>
            <person name="Schoenbach C."/>
            <person name="Sekiguchi K."/>
            <person name="Semple C.A."/>
            <person name="Seno S."/>
            <person name="Sessa L."/>
            <person name="Sheng Y."/>
            <person name="Shibata Y."/>
            <person name="Shimada H."/>
            <person name="Shimada K."/>
            <person name="Silva D."/>
            <person name="Sinclair B."/>
            <person name="Sperling S."/>
            <person name="Stupka E."/>
            <person name="Sugiura K."/>
            <person name="Sultana R."/>
            <person name="Takenaka Y."/>
            <person name="Taki K."/>
            <person name="Tammoja K."/>
            <person name="Tan S.L."/>
            <person name="Tang S."/>
            <person name="Taylor M.S."/>
            <person name="Tegner J."/>
            <person name="Teichmann S.A."/>
            <person name="Ueda H.R."/>
            <person name="van Nimwegen E."/>
            <person name="Verardo R."/>
            <person name="Wei C.L."/>
            <person name="Yagi K."/>
            <person name="Yamanishi H."/>
            <person name="Zabarovsky E."/>
            <person name="Zhu S."/>
            <person name="Zimmer A."/>
            <person name="Hide W."/>
            <person name="Bult C."/>
            <person name="Grimmond S.M."/>
            <person name="Teasdale R.D."/>
            <person name="Liu E.T."/>
            <person name="Brusic V."/>
            <person name="Quackenbush J."/>
            <person name="Wahlestedt C."/>
            <person name="Mattick J.S."/>
            <person name="Hume D.A."/>
            <person name="Kai C."/>
            <person name="Sasaki D."/>
            <person name="Tomaru Y."/>
            <person name="Fukuda S."/>
            <person name="Kanamori-Katayama M."/>
            <person name="Suzuki M."/>
            <person name="Aoki J."/>
            <person name="Arakawa T."/>
            <person name="Iida J."/>
            <person name="Imamura K."/>
            <person name="Itoh M."/>
            <person name="Kato T."/>
            <person name="Kawaji H."/>
            <person name="Kawagashira N."/>
            <person name="Kawashima T."/>
            <person name="Kojima M."/>
            <person name="Kondo S."/>
            <person name="Konno H."/>
            <person name="Nakano K."/>
            <person name="Ninomiya N."/>
            <person name="Nishio T."/>
            <person name="Okada M."/>
            <person name="Plessy C."/>
            <person name="Shibata K."/>
            <person name="Shiraki T."/>
            <person name="Suzuki S."/>
            <person name="Tagami M."/>
            <person name="Waki K."/>
            <person name="Watahiki A."/>
            <person name="Okamura-Oho Y."/>
            <person name="Suzuki H."/>
            <person name="Kawai J."/>
            <person name="Hayashizaki Y."/>
        </authorList>
    </citation>
    <scope>NUCLEOTIDE SEQUENCE [LARGE SCALE MRNA] (ISOFORM 1)</scope>
    <source>
        <strain>C57BL/6J</strain>
        <tissue>Head</tissue>
        <tissue>Tongue</tissue>
    </source>
</reference>
<reference key="2">
    <citation type="journal article" date="2004" name="Genome Res.">
        <title>The status, quality, and expansion of the NIH full-length cDNA project: the Mammalian Gene Collection (MGC).</title>
        <authorList>
            <consortium name="The MGC Project Team"/>
        </authorList>
    </citation>
    <scope>NUCLEOTIDE SEQUENCE [LARGE SCALE MRNA] (ISOFORM 2)</scope>
    <source>
        <tissue>Brain</tissue>
    </source>
</reference>
<reference key="3">
    <citation type="journal article" date="2010" name="Cell">
        <title>A tissue-specific atlas of mouse protein phosphorylation and expression.</title>
        <authorList>
            <person name="Huttlin E.L."/>
            <person name="Jedrychowski M.P."/>
            <person name="Elias J.E."/>
            <person name="Goswami T."/>
            <person name="Rad R."/>
            <person name="Beausoleil S.A."/>
            <person name="Villen J."/>
            <person name="Haas W."/>
            <person name="Sowa M.E."/>
            <person name="Gygi S.P."/>
        </authorList>
    </citation>
    <scope>IDENTIFICATION BY MASS SPECTROMETRY [LARGE SCALE ANALYSIS]</scope>
    <source>
        <tissue>Heart</tissue>
    </source>
</reference>
<reference key="4">
    <citation type="journal article" date="2013" name="Am. J. Hum. Genet.">
        <title>Mutations in KLHL40 are a frequent cause of severe autosomal-recessive nemaline myopathy.</title>
        <authorList>
            <person name="Ravenscroft G."/>
            <person name="Miyatake S."/>
            <person name="Lehtokari V.L."/>
            <person name="Todd E.J."/>
            <person name="Vornanen P."/>
            <person name="Yau K.S."/>
            <person name="Hayashi Y.K."/>
            <person name="Miyake N."/>
            <person name="Tsurusaki Y."/>
            <person name="Doi H."/>
            <person name="Saitsu H."/>
            <person name="Osaka H."/>
            <person name="Yamashita S."/>
            <person name="Ohya T."/>
            <person name="Sakamoto Y."/>
            <person name="Koshimizu E."/>
            <person name="Imamura S."/>
            <person name="Yamashita M."/>
            <person name="Ogata K."/>
            <person name="Shiina M."/>
            <person name="Bryson-Richardson R.J."/>
            <person name="Vaz R."/>
            <person name="Ceyhan O."/>
            <person name="Brownstein C.A."/>
            <person name="Swanson L.C."/>
            <person name="Monnot S."/>
            <person name="Romero N.B."/>
            <person name="Amthor H."/>
            <person name="Kresoje N."/>
            <person name="Sivadorai P."/>
            <person name="Kiraly-Borri C."/>
            <person name="Haliloglu G."/>
            <person name="Talim B."/>
            <person name="Orhan D."/>
            <person name="Kale G."/>
            <person name="Charles A.K."/>
            <person name="Fabian V.A."/>
            <person name="Davis M.R."/>
            <person name="Lammens M."/>
            <person name="Sewry C.A."/>
            <person name="Manzur A."/>
            <person name="Muntoni F."/>
            <person name="Clarke N.F."/>
            <person name="North K.N."/>
            <person name="Bertini E."/>
            <person name="Nevo Y."/>
            <person name="Willichowski E."/>
            <person name="Silberg I.E."/>
            <person name="Topaloglu H."/>
            <person name="Beggs A.H."/>
            <person name="Allcock R.J."/>
            <person name="Nishino I."/>
            <person name="Wallgren-Pettersson C."/>
            <person name="Matsumoto N."/>
            <person name="Laing N.G."/>
        </authorList>
    </citation>
    <scope>TISSUE SPECIFICITY</scope>
    <scope>INDUCTION</scope>
</reference>
<reference key="5">
    <citation type="journal article" date="2013" name="Differentiation">
        <title>Kbtbd5 is regulated by MyoD and restricted to the myogenic lineage.</title>
        <authorList>
            <person name="Bowlin K.M."/>
            <person name="Embree L.J."/>
            <person name="Garry M.G."/>
            <person name="Garry D.J."/>
            <person name="Shi X."/>
        </authorList>
    </citation>
    <scope>DEVELOPMENTAL STAGE</scope>
    <scope>INDUCTION</scope>
    <scope>IDENTIFICATION IN THE BCR(KLHL40) COMPLEX</scope>
</reference>
<reference key="6">
    <citation type="journal article" date="2014" name="J. Clin. Invest.">
        <title>KLHL40 deficiency destabilizes thin filament proteins and promotes nemaline myopathy.</title>
        <authorList>
            <person name="Garg A."/>
            <person name="O'Rourke J."/>
            <person name="Long C."/>
            <person name="Doering J."/>
            <person name="Ravenscroft G."/>
            <person name="Bezprozvannaya S."/>
            <person name="Nelson B.R."/>
            <person name="Beetz N."/>
            <person name="Li L."/>
            <person name="Chen S."/>
            <person name="Laing N.G."/>
            <person name="Grange R.W."/>
            <person name="Bassel-Duby R."/>
            <person name="Olson E.N."/>
        </authorList>
    </citation>
    <scope>FUNCTION</scope>
    <scope>SUBCELLULAR LOCATION</scope>
    <scope>INTERACTION WITH LMOD3</scope>
    <scope>DISRUPTION PHENOTYPE</scope>
</reference>
<reference key="7">
    <citation type="journal article" date="2015" name="J. Biol. Chem.">
        <title>Kelch repeat and BTB domain containing protein 5 (Kbtbd5) regulates skeletal muscle myogenesis through the E2F1-DP1 complex.</title>
        <authorList>
            <person name="Gong W."/>
            <person name="Gohla R.M."/>
            <person name="Bowlin K.M."/>
            <person name="Koyano-Nakagawa N."/>
            <person name="Garry D.J."/>
            <person name="Shi X."/>
        </authorList>
    </citation>
    <scope>FUNCTION</scope>
    <scope>SUBCELLULAR LOCATION</scope>
    <scope>DISRUPTION PHENOTYPE</scope>
</reference>
<accession>Q9D783</accession>
<accession>B9EHG6</accession>
<accession>Q059P8</accession>
<accession>Q3TUF0</accession>
<sequence>MTLGLEQAEEQRLYQQTLLQDGLKDMLDHGKFLDCVVRVGEREFPCHRLVLAACSPYFRARFLAEPDSAGEVRLEEVSPDVVSQVLHYLYTSEIALDEASVQDLFAAAHRFQIPSIFTICVSFLQKRLCLANCLAVFRLGLLLDCARLAVAARDFICARFPLVARDNDFLGLSADELIAIISSDGLNVEKEEAVFEAVMRWASSGDAEAQAERQRALPTVFESVRCRLLPRAFLETRVERHPLVRSQPELLRKVQMVKDAHEGRLTTLRKKKKEKGEQTARAKEANQGTEDTKAEDDEERVLPGILNDTLRFGMFLQDLIFMISEEGAVAYDPAANECYCASLSTQIPKNHVSLVTKENQVFVAGGLFYNEDNKEDPMSAYFLQFDHLDSEWLGMPPLPSPRCLFGLGEALNAIYVVGGRELKDSEDSLDSVLCYDRLSFKWGESDPLPYAVYGHTVLSHMDLVYVIGGKGKDRKCLNKMCVYDPKKFEWKELAPMQTARSLFGATVHDGRIFVAAGVTDTGLTSSSEVYSIADNKWTSFEAFPQERSSLSLVSLAGTLYALGGFATLETESGELVPTELNDIWRYNEDEKKWEGVLREIAYAAGATFLPVRLNVVRLTKM</sequence>
<gene>
    <name evidence="12" type="primary">Klhl40</name>
    <name evidence="9 10" type="synonym">Kbtbd5</name>
</gene>
<proteinExistence type="evidence at protein level"/>
<protein>
    <recommendedName>
        <fullName evidence="11">Kelch-like protein 40</fullName>
    </recommendedName>
    <alternativeName>
        <fullName evidence="9 10">Kelch repeat and BTB domain-containing protein 5</fullName>
    </alternativeName>
</protein>